<reference key="1">
    <citation type="journal article" date="2002" name="Nature">
        <title>The genome sequence of Schizosaccharomyces pombe.</title>
        <authorList>
            <person name="Wood V."/>
            <person name="Gwilliam R."/>
            <person name="Rajandream M.A."/>
            <person name="Lyne M.H."/>
            <person name="Lyne R."/>
            <person name="Stewart A."/>
            <person name="Sgouros J.G."/>
            <person name="Peat N."/>
            <person name="Hayles J."/>
            <person name="Baker S.G."/>
            <person name="Basham D."/>
            <person name="Bowman S."/>
            <person name="Brooks K."/>
            <person name="Brown D."/>
            <person name="Brown S."/>
            <person name="Chillingworth T."/>
            <person name="Churcher C.M."/>
            <person name="Collins M."/>
            <person name="Connor R."/>
            <person name="Cronin A."/>
            <person name="Davis P."/>
            <person name="Feltwell T."/>
            <person name="Fraser A."/>
            <person name="Gentles S."/>
            <person name="Goble A."/>
            <person name="Hamlin N."/>
            <person name="Harris D.E."/>
            <person name="Hidalgo J."/>
            <person name="Hodgson G."/>
            <person name="Holroyd S."/>
            <person name="Hornsby T."/>
            <person name="Howarth S."/>
            <person name="Huckle E.J."/>
            <person name="Hunt S."/>
            <person name="Jagels K."/>
            <person name="James K.D."/>
            <person name="Jones L."/>
            <person name="Jones M."/>
            <person name="Leather S."/>
            <person name="McDonald S."/>
            <person name="McLean J."/>
            <person name="Mooney P."/>
            <person name="Moule S."/>
            <person name="Mungall K.L."/>
            <person name="Murphy L.D."/>
            <person name="Niblett D."/>
            <person name="Odell C."/>
            <person name="Oliver K."/>
            <person name="O'Neil S."/>
            <person name="Pearson D."/>
            <person name="Quail M.A."/>
            <person name="Rabbinowitsch E."/>
            <person name="Rutherford K.M."/>
            <person name="Rutter S."/>
            <person name="Saunders D."/>
            <person name="Seeger K."/>
            <person name="Sharp S."/>
            <person name="Skelton J."/>
            <person name="Simmonds M.N."/>
            <person name="Squares R."/>
            <person name="Squares S."/>
            <person name="Stevens K."/>
            <person name="Taylor K."/>
            <person name="Taylor R.G."/>
            <person name="Tivey A."/>
            <person name="Walsh S.V."/>
            <person name="Warren T."/>
            <person name="Whitehead S."/>
            <person name="Woodward J.R."/>
            <person name="Volckaert G."/>
            <person name="Aert R."/>
            <person name="Robben J."/>
            <person name="Grymonprez B."/>
            <person name="Weltjens I."/>
            <person name="Vanstreels E."/>
            <person name="Rieger M."/>
            <person name="Schaefer M."/>
            <person name="Mueller-Auer S."/>
            <person name="Gabel C."/>
            <person name="Fuchs M."/>
            <person name="Duesterhoeft A."/>
            <person name="Fritzc C."/>
            <person name="Holzer E."/>
            <person name="Moestl D."/>
            <person name="Hilbert H."/>
            <person name="Borzym K."/>
            <person name="Langer I."/>
            <person name="Beck A."/>
            <person name="Lehrach H."/>
            <person name="Reinhardt R."/>
            <person name="Pohl T.M."/>
            <person name="Eger P."/>
            <person name="Zimmermann W."/>
            <person name="Wedler H."/>
            <person name="Wambutt R."/>
            <person name="Purnelle B."/>
            <person name="Goffeau A."/>
            <person name="Cadieu E."/>
            <person name="Dreano S."/>
            <person name="Gloux S."/>
            <person name="Lelaure V."/>
            <person name="Mottier S."/>
            <person name="Galibert F."/>
            <person name="Aves S.J."/>
            <person name="Xiang Z."/>
            <person name="Hunt C."/>
            <person name="Moore K."/>
            <person name="Hurst S.M."/>
            <person name="Lucas M."/>
            <person name="Rochet M."/>
            <person name="Gaillardin C."/>
            <person name="Tallada V.A."/>
            <person name="Garzon A."/>
            <person name="Thode G."/>
            <person name="Daga R.R."/>
            <person name="Cruzado L."/>
            <person name="Jimenez J."/>
            <person name="Sanchez M."/>
            <person name="del Rey F."/>
            <person name="Benito J."/>
            <person name="Dominguez A."/>
            <person name="Revuelta J.L."/>
            <person name="Moreno S."/>
            <person name="Armstrong J."/>
            <person name="Forsburg S.L."/>
            <person name="Cerutti L."/>
            <person name="Lowe T."/>
            <person name="McCombie W.R."/>
            <person name="Paulsen I."/>
            <person name="Potashkin J."/>
            <person name="Shpakovski G.V."/>
            <person name="Ussery D."/>
            <person name="Barrell B.G."/>
            <person name="Nurse P."/>
        </authorList>
    </citation>
    <scope>NUCLEOTIDE SEQUENCE [LARGE SCALE GENOMIC DNA]</scope>
    <source>
        <strain>972 / ATCC 24843</strain>
    </source>
</reference>
<reference key="2">
    <citation type="journal article" date="2006" name="Nat. Biotechnol.">
        <title>ORFeome cloning and global analysis of protein localization in the fission yeast Schizosaccharomyces pombe.</title>
        <authorList>
            <person name="Matsuyama A."/>
            <person name="Arai R."/>
            <person name="Yashiroda Y."/>
            <person name="Shirai A."/>
            <person name="Kamata A."/>
            <person name="Sekido S."/>
            <person name="Kobayashi Y."/>
            <person name="Hashimoto A."/>
            <person name="Hamamoto M."/>
            <person name="Hiraoka Y."/>
            <person name="Horinouchi S."/>
            <person name="Yoshida M."/>
        </authorList>
    </citation>
    <scope>SUBCELLULAR LOCATION [LARGE SCALE ANALYSIS]</scope>
</reference>
<feature type="chain" id="PRO_0000374032" description="Uncharacterized oxidoreductase C24B10.20">
    <location>
        <begin position="1"/>
        <end position="254"/>
    </location>
</feature>
<feature type="active site" description="Proton donor" evidence="2">
    <location>
        <position position="159"/>
    </location>
</feature>
<feature type="active site" description="Lowers pKa of active site Tyr" evidence="2">
    <location>
        <position position="163"/>
    </location>
</feature>
<feature type="binding site" evidence="1">
    <location>
        <position position="18"/>
    </location>
    <ligand>
        <name>NADP(+)</name>
        <dbReference type="ChEBI" id="CHEBI:58349"/>
    </ligand>
</feature>
<feature type="binding site" evidence="1">
    <location>
        <position position="37"/>
    </location>
    <ligand>
        <name>NADP(+)</name>
        <dbReference type="ChEBI" id="CHEBI:58349"/>
    </ligand>
</feature>
<feature type="binding site" evidence="1">
    <location>
        <position position="63"/>
    </location>
    <ligand>
        <name>NADP(+)</name>
        <dbReference type="ChEBI" id="CHEBI:58349"/>
    </ligand>
</feature>
<feature type="binding site" evidence="2">
    <location>
        <position position="90"/>
    </location>
    <ligand>
        <name>NADP(+)</name>
        <dbReference type="ChEBI" id="CHEBI:58349"/>
    </ligand>
</feature>
<feature type="binding site" evidence="2">
    <location>
        <position position="159"/>
    </location>
    <ligand>
        <name>NADP(+)</name>
        <dbReference type="ChEBI" id="CHEBI:58349"/>
    </ligand>
</feature>
<feature type="binding site" evidence="2">
    <location>
        <position position="163"/>
    </location>
    <ligand>
        <name>NADP(+)</name>
        <dbReference type="ChEBI" id="CHEBI:58349"/>
    </ligand>
</feature>
<feature type="binding site" evidence="2">
    <location>
        <position position="192"/>
    </location>
    <ligand>
        <name>NADP(+)</name>
        <dbReference type="ChEBI" id="CHEBI:58349"/>
    </ligand>
</feature>
<feature type="binding site" evidence="1">
    <location>
        <position position="194"/>
    </location>
    <ligand>
        <name>NADP(+)</name>
        <dbReference type="ChEBI" id="CHEBI:58349"/>
    </ligand>
</feature>
<name>YJNK_SCHPO</name>
<comment type="subcellular location">
    <subcellularLocation>
        <location evidence="3">Cytoplasm</location>
    </subcellularLocation>
    <subcellularLocation>
        <location evidence="3">Nucleus</location>
    </subcellularLocation>
</comment>
<comment type="similarity">
    <text evidence="4">Belongs to the short-chain dehydrogenases/reductases (SDR) family.</text>
</comment>
<protein>
    <recommendedName>
        <fullName>Uncharacterized oxidoreductase C24B10.20</fullName>
        <ecNumber>1.-.-.-</ecNumber>
    </recommendedName>
</protein>
<accession>Q9P7I6</accession>
<organism>
    <name type="scientific">Schizosaccharomyces pombe (strain 972 / ATCC 24843)</name>
    <name type="common">Fission yeast</name>
    <dbReference type="NCBI Taxonomy" id="284812"/>
    <lineage>
        <taxon>Eukaryota</taxon>
        <taxon>Fungi</taxon>
        <taxon>Dikarya</taxon>
        <taxon>Ascomycota</taxon>
        <taxon>Taphrinomycotina</taxon>
        <taxon>Schizosaccharomycetes</taxon>
        <taxon>Schizosaccharomycetales</taxon>
        <taxon>Schizosaccharomycetaceae</taxon>
        <taxon>Schizosaccharomyces</taxon>
    </lineage>
</organism>
<proteinExistence type="inferred from homology"/>
<evidence type="ECO:0000250" key="1">
    <source>
        <dbReference type="UniProtKB" id="L0E2Z4"/>
    </source>
</evidence>
<evidence type="ECO:0000250" key="2">
    <source>
        <dbReference type="UniProtKB" id="O93868"/>
    </source>
</evidence>
<evidence type="ECO:0000269" key="3">
    <source>
    </source>
</evidence>
<evidence type="ECO:0000305" key="4"/>
<gene>
    <name type="ORF">SPCC24B10.20</name>
</gene>
<dbReference type="EC" id="1.-.-.-"/>
<dbReference type="EMBL" id="CU329672">
    <property type="protein sequence ID" value="CAB76229.1"/>
    <property type="molecule type" value="Genomic_DNA"/>
</dbReference>
<dbReference type="PIR" id="T50427">
    <property type="entry name" value="T50427"/>
</dbReference>
<dbReference type="RefSeq" id="NP_588023.1">
    <property type="nucleotide sequence ID" value="NM_001023014.1"/>
</dbReference>
<dbReference type="SMR" id="Q9P7I6"/>
<dbReference type="BioGRID" id="275532">
    <property type="interactions" value="4"/>
</dbReference>
<dbReference type="FunCoup" id="Q9P7I6">
    <property type="interactions" value="110"/>
</dbReference>
<dbReference type="iPTMnet" id="Q9P7I6"/>
<dbReference type="PaxDb" id="4896-SPCC24B10.20.1"/>
<dbReference type="EnsemblFungi" id="SPCC24B10.20.1">
    <property type="protein sequence ID" value="SPCC24B10.20.1:pep"/>
    <property type="gene ID" value="SPCC24B10.20"/>
</dbReference>
<dbReference type="KEGG" id="spo:2538958"/>
<dbReference type="PomBase" id="SPCC24B10.20"/>
<dbReference type="VEuPathDB" id="FungiDB:SPCC24B10.20"/>
<dbReference type="eggNOG" id="KOG1611">
    <property type="taxonomic scope" value="Eukaryota"/>
</dbReference>
<dbReference type="HOGENOM" id="CLU_010194_9_1_1"/>
<dbReference type="InParanoid" id="Q9P7I6"/>
<dbReference type="OMA" id="DSWISHY"/>
<dbReference type="PhylomeDB" id="Q9P7I6"/>
<dbReference type="PRO" id="PR:Q9P7I6"/>
<dbReference type="Proteomes" id="UP000002485">
    <property type="component" value="Chromosome III"/>
</dbReference>
<dbReference type="GO" id="GO:0005737">
    <property type="term" value="C:cytoplasm"/>
    <property type="evidence" value="ECO:0000318"/>
    <property type="project" value="GO_Central"/>
</dbReference>
<dbReference type="GO" id="GO:0005829">
    <property type="term" value="C:cytosol"/>
    <property type="evidence" value="ECO:0007005"/>
    <property type="project" value="PomBase"/>
</dbReference>
<dbReference type="GO" id="GO:0005634">
    <property type="term" value="C:nucleus"/>
    <property type="evidence" value="ECO:0007005"/>
    <property type="project" value="PomBase"/>
</dbReference>
<dbReference type="GO" id="GO:0016491">
    <property type="term" value="F:oxidoreductase activity"/>
    <property type="evidence" value="ECO:0000318"/>
    <property type="project" value="GO_Central"/>
</dbReference>
<dbReference type="GO" id="GO:0110095">
    <property type="term" value="P:cellular detoxification of aldehyde"/>
    <property type="evidence" value="ECO:0000250"/>
    <property type="project" value="PomBase"/>
</dbReference>
<dbReference type="CDD" id="cd05325">
    <property type="entry name" value="carb_red_sniffer_like_SDR_c"/>
    <property type="match status" value="1"/>
</dbReference>
<dbReference type="FunFam" id="3.40.50.720:FF:000599">
    <property type="entry name" value="Uncharacterized oxidoreductase C663.06c"/>
    <property type="match status" value="1"/>
</dbReference>
<dbReference type="Gene3D" id="3.40.50.720">
    <property type="entry name" value="NAD(P)-binding Rossmann-like Domain"/>
    <property type="match status" value="1"/>
</dbReference>
<dbReference type="InterPro" id="IPR051468">
    <property type="entry name" value="Fungal_SecMetab_SDRs"/>
</dbReference>
<dbReference type="InterPro" id="IPR036291">
    <property type="entry name" value="NAD(P)-bd_dom_sf"/>
</dbReference>
<dbReference type="InterPro" id="IPR002347">
    <property type="entry name" value="SDR_fam"/>
</dbReference>
<dbReference type="PANTHER" id="PTHR43544:SF7">
    <property type="entry name" value="NADB-LER2"/>
    <property type="match status" value="1"/>
</dbReference>
<dbReference type="PANTHER" id="PTHR43544">
    <property type="entry name" value="SHORT-CHAIN DEHYDROGENASE/REDUCTASE"/>
    <property type="match status" value="1"/>
</dbReference>
<dbReference type="Pfam" id="PF00106">
    <property type="entry name" value="adh_short"/>
    <property type="match status" value="1"/>
</dbReference>
<dbReference type="PRINTS" id="PR00081">
    <property type="entry name" value="GDHRDH"/>
</dbReference>
<dbReference type="SUPFAM" id="SSF51735">
    <property type="entry name" value="NAD(P)-binding Rossmann-fold domains"/>
    <property type="match status" value="1"/>
</dbReference>
<keyword id="KW-0963">Cytoplasm</keyword>
<keyword id="KW-0521">NADP</keyword>
<keyword id="KW-0539">Nucleus</keyword>
<keyword id="KW-0560">Oxidoreductase</keyword>
<keyword id="KW-1185">Reference proteome</keyword>
<sequence>MSAAGGIVYVIVGGNRGIGLSLVKELSNKEGVTVFASARGPGSASELKDWSKTHSNVHIIKLDVTSLRSAKDAAMQVEKVVKCIDVLWVNSGISKSFQPVLKTSDELWMSHYQTNVLGPIHVYQAFYHLLKEGKLKNIVFTSSMAACMGGVRPNTYSAYGQSKAALNYTMKEISFELEKDGFVVVSIHPGVVNTDMFVNAMQKLASKYPEMVESIKSNAISPEQSASSMLKIVDNLKTEDNGMFYNLDGTKLPF</sequence>